<evidence type="ECO:0000255" key="1"/>
<evidence type="ECO:0000256" key="2">
    <source>
        <dbReference type="SAM" id="MobiDB-lite"/>
    </source>
</evidence>
<evidence type="ECO:0000269" key="3">
    <source>
    </source>
</evidence>
<evidence type="ECO:0000305" key="4"/>
<protein>
    <recommendedName>
        <fullName>Golgin subfamily A member 6A</fullName>
    </recommendedName>
    <alternativeName>
        <fullName>Golgin linked to PML</fullName>
    </alternativeName>
    <alternativeName>
        <fullName>Golgin-like protein</fullName>
    </alternativeName>
</protein>
<keyword id="KW-0175">Coiled coil</keyword>
<keyword id="KW-1185">Reference proteome</keyword>
<gene>
    <name type="primary">GOLGA6A</name>
    <name type="synonym">GLP</name>
    <name type="synonym">GOLGA6</name>
</gene>
<organism>
    <name type="scientific">Homo sapiens</name>
    <name type="common">Human</name>
    <dbReference type="NCBI Taxonomy" id="9606"/>
    <lineage>
        <taxon>Eukaryota</taxon>
        <taxon>Metazoa</taxon>
        <taxon>Chordata</taxon>
        <taxon>Craniata</taxon>
        <taxon>Vertebrata</taxon>
        <taxon>Euteleostomi</taxon>
        <taxon>Mammalia</taxon>
        <taxon>Eutheria</taxon>
        <taxon>Euarchontoglires</taxon>
        <taxon>Primates</taxon>
        <taxon>Haplorrhini</taxon>
        <taxon>Catarrhini</taxon>
        <taxon>Hominidae</taxon>
        <taxon>Homo</taxon>
    </lineage>
</organism>
<feature type="chain" id="PRO_0000190069" description="Golgin subfamily A member 6A">
    <location>
        <begin position="1"/>
        <end position="693"/>
    </location>
</feature>
<feature type="region of interest" description="Disordered" evidence="2">
    <location>
        <begin position="20"/>
        <end position="69"/>
    </location>
</feature>
<feature type="region of interest" description="Disordered" evidence="2">
    <location>
        <begin position="497"/>
        <end position="547"/>
    </location>
</feature>
<feature type="region of interest" description="Disordered" evidence="2">
    <location>
        <begin position="661"/>
        <end position="693"/>
    </location>
</feature>
<feature type="coiled-coil region" evidence="1">
    <location>
        <begin position="14"/>
        <end position="611"/>
    </location>
</feature>
<feature type="compositionally biased region" description="Polar residues" evidence="2">
    <location>
        <begin position="54"/>
        <end position="69"/>
    </location>
</feature>
<feature type="compositionally biased region" description="Basic and acidic residues" evidence="2">
    <location>
        <begin position="537"/>
        <end position="547"/>
    </location>
</feature>
<feature type="compositionally biased region" description="Polar residues" evidence="2">
    <location>
        <begin position="676"/>
        <end position="693"/>
    </location>
</feature>
<feature type="sequence variant" id="VAR_047540" description="In dbSNP:rs2018461." evidence="3">
    <original>W</original>
    <variation>R</variation>
    <location>
        <position position="200"/>
    </location>
</feature>
<feature type="sequence conflict" description="In Ref. 1; AAF72196." evidence="4" ref="1">
    <original>S</original>
    <variation>N</variation>
    <location>
        <position position="86"/>
    </location>
</feature>
<feature type="sequence conflict" description="In Ref. 1; AAF72196." evidence="4" ref="1">
    <original>R</original>
    <variation>Q</variation>
    <location>
        <position position="123"/>
    </location>
</feature>
<feature type="sequence conflict" description="In Ref. 2; BAF85263." evidence="4" ref="2">
    <original>K</original>
    <variation>E</variation>
    <location>
        <position position="134"/>
    </location>
</feature>
<feature type="sequence conflict" description="In Ref. 1; AAF72535." evidence="4" ref="1">
    <original>Q</original>
    <variation>H</variation>
    <location>
        <position position="198"/>
    </location>
</feature>
<feature type="sequence conflict" description="In Ref. 1; AAF72535." evidence="4" ref="1">
    <original>VTDGMR</original>
    <variation>LCPLTG</variation>
    <location>
        <begin position="561"/>
        <end position="566"/>
    </location>
</feature>
<proteinExistence type="evidence at protein level"/>
<reference key="1">
    <citation type="journal article" date="2000" name="Genomics">
        <title>Cloning and characterization of a golgin-related gene from the large-scale polymorphism linked to the PML gene.</title>
        <authorList>
            <person name="Gilles F."/>
            <person name="Goy A."/>
            <person name="Remache Y."/>
            <person name="Manova K."/>
            <person name="Zelenetz A.D."/>
        </authorList>
    </citation>
    <scope>NUCLEOTIDE SEQUENCE [GENOMIC DNA / MRNA]</scope>
    <scope>VARIANT ARG-200</scope>
    <source>
        <tissue>Testis</tissue>
    </source>
</reference>
<reference key="2">
    <citation type="journal article" date="2004" name="Nat. Genet.">
        <title>Complete sequencing and characterization of 21,243 full-length human cDNAs.</title>
        <authorList>
            <person name="Ota T."/>
            <person name="Suzuki Y."/>
            <person name="Nishikawa T."/>
            <person name="Otsuki T."/>
            <person name="Sugiyama T."/>
            <person name="Irie R."/>
            <person name="Wakamatsu A."/>
            <person name="Hayashi K."/>
            <person name="Sato H."/>
            <person name="Nagai K."/>
            <person name="Kimura K."/>
            <person name="Makita H."/>
            <person name="Sekine M."/>
            <person name="Obayashi M."/>
            <person name="Nishi T."/>
            <person name="Shibahara T."/>
            <person name="Tanaka T."/>
            <person name="Ishii S."/>
            <person name="Yamamoto J."/>
            <person name="Saito K."/>
            <person name="Kawai Y."/>
            <person name="Isono Y."/>
            <person name="Nakamura Y."/>
            <person name="Nagahari K."/>
            <person name="Murakami K."/>
            <person name="Yasuda T."/>
            <person name="Iwayanagi T."/>
            <person name="Wagatsuma M."/>
            <person name="Shiratori A."/>
            <person name="Sudo H."/>
            <person name="Hosoiri T."/>
            <person name="Kaku Y."/>
            <person name="Kodaira H."/>
            <person name="Kondo H."/>
            <person name="Sugawara M."/>
            <person name="Takahashi M."/>
            <person name="Kanda K."/>
            <person name="Yokoi T."/>
            <person name="Furuya T."/>
            <person name="Kikkawa E."/>
            <person name="Omura Y."/>
            <person name="Abe K."/>
            <person name="Kamihara K."/>
            <person name="Katsuta N."/>
            <person name="Sato K."/>
            <person name="Tanikawa M."/>
            <person name="Yamazaki M."/>
            <person name="Ninomiya K."/>
            <person name="Ishibashi T."/>
            <person name="Yamashita H."/>
            <person name="Murakawa K."/>
            <person name="Fujimori K."/>
            <person name="Tanai H."/>
            <person name="Kimata M."/>
            <person name="Watanabe M."/>
            <person name="Hiraoka S."/>
            <person name="Chiba Y."/>
            <person name="Ishida S."/>
            <person name="Ono Y."/>
            <person name="Takiguchi S."/>
            <person name="Watanabe S."/>
            <person name="Yosida M."/>
            <person name="Hotuta T."/>
            <person name="Kusano J."/>
            <person name="Kanehori K."/>
            <person name="Takahashi-Fujii A."/>
            <person name="Hara H."/>
            <person name="Tanase T.-O."/>
            <person name="Nomura Y."/>
            <person name="Togiya S."/>
            <person name="Komai F."/>
            <person name="Hara R."/>
            <person name="Takeuchi K."/>
            <person name="Arita M."/>
            <person name="Imose N."/>
            <person name="Musashino K."/>
            <person name="Yuuki H."/>
            <person name="Oshima A."/>
            <person name="Sasaki N."/>
            <person name="Aotsuka S."/>
            <person name="Yoshikawa Y."/>
            <person name="Matsunawa H."/>
            <person name="Ichihara T."/>
            <person name="Shiohata N."/>
            <person name="Sano S."/>
            <person name="Moriya S."/>
            <person name="Momiyama H."/>
            <person name="Satoh N."/>
            <person name="Takami S."/>
            <person name="Terashima Y."/>
            <person name="Suzuki O."/>
            <person name="Nakagawa S."/>
            <person name="Senoh A."/>
            <person name="Mizoguchi H."/>
            <person name="Goto Y."/>
            <person name="Shimizu F."/>
            <person name="Wakebe H."/>
            <person name="Hishigaki H."/>
            <person name="Watanabe T."/>
            <person name="Sugiyama A."/>
            <person name="Takemoto M."/>
            <person name="Kawakami B."/>
            <person name="Yamazaki M."/>
            <person name="Watanabe K."/>
            <person name="Kumagai A."/>
            <person name="Itakura S."/>
            <person name="Fukuzumi Y."/>
            <person name="Fujimori Y."/>
            <person name="Komiyama M."/>
            <person name="Tashiro H."/>
            <person name="Tanigami A."/>
            <person name="Fujiwara T."/>
            <person name="Ono T."/>
            <person name="Yamada K."/>
            <person name="Fujii Y."/>
            <person name="Ozaki K."/>
            <person name="Hirao M."/>
            <person name="Ohmori Y."/>
            <person name="Kawabata A."/>
            <person name="Hikiji T."/>
            <person name="Kobatake N."/>
            <person name="Inagaki H."/>
            <person name="Ikema Y."/>
            <person name="Okamoto S."/>
            <person name="Okitani R."/>
            <person name="Kawakami T."/>
            <person name="Noguchi S."/>
            <person name="Itoh T."/>
            <person name="Shigeta K."/>
            <person name="Senba T."/>
            <person name="Matsumura K."/>
            <person name="Nakajima Y."/>
            <person name="Mizuno T."/>
            <person name="Morinaga M."/>
            <person name="Sasaki M."/>
            <person name="Togashi T."/>
            <person name="Oyama M."/>
            <person name="Hata H."/>
            <person name="Watanabe M."/>
            <person name="Komatsu T."/>
            <person name="Mizushima-Sugano J."/>
            <person name="Satoh T."/>
            <person name="Shirai Y."/>
            <person name="Takahashi Y."/>
            <person name="Nakagawa K."/>
            <person name="Okumura K."/>
            <person name="Nagase T."/>
            <person name="Nomura N."/>
            <person name="Kikuchi H."/>
            <person name="Masuho Y."/>
            <person name="Yamashita R."/>
            <person name="Nakai K."/>
            <person name="Yada T."/>
            <person name="Nakamura Y."/>
            <person name="Ohara O."/>
            <person name="Isogai T."/>
            <person name="Sugano S."/>
        </authorList>
    </citation>
    <scope>NUCLEOTIDE SEQUENCE [LARGE SCALE MRNA]</scope>
    <source>
        <tissue>Testis</tissue>
    </source>
</reference>
<reference key="3">
    <citation type="journal article" date="2006" name="Nature">
        <title>Analysis of the DNA sequence and duplication history of human chromosome 15.</title>
        <authorList>
            <person name="Zody M.C."/>
            <person name="Garber M."/>
            <person name="Sharpe T."/>
            <person name="Young S.K."/>
            <person name="Rowen L."/>
            <person name="O'Neill K."/>
            <person name="Whittaker C.A."/>
            <person name="Kamal M."/>
            <person name="Chang J.L."/>
            <person name="Cuomo C.A."/>
            <person name="Dewar K."/>
            <person name="FitzGerald M.G."/>
            <person name="Kodira C.D."/>
            <person name="Madan A."/>
            <person name="Qin S."/>
            <person name="Yang X."/>
            <person name="Abbasi N."/>
            <person name="Abouelleil A."/>
            <person name="Arachchi H.M."/>
            <person name="Baradarani L."/>
            <person name="Birditt B."/>
            <person name="Bloom S."/>
            <person name="Bloom T."/>
            <person name="Borowsky M.L."/>
            <person name="Burke J."/>
            <person name="Butler J."/>
            <person name="Cook A."/>
            <person name="DeArellano K."/>
            <person name="DeCaprio D."/>
            <person name="Dorris L. III"/>
            <person name="Dors M."/>
            <person name="Eichler E.E."/>
            <person name="Engels R."/>
            <person name="Fahey J."/>
            <person name="Fleetwood P."/>
            <person name="Friedman C."/>
            <person name="Gearin G."/>
            <person name="Hall J.L."/>
            <person name="Hensley G."/>
            <person name="Johnson E."/>
            <person name="Jones C."/>
            <person name="Kamat A."/>
            <person name="Kaur A."/>
            <person name="Locke D.P."/>
            <person name="Madan A."/>
            <person name="Munson G."/>
            <person name="Jaffe D.B."/>
            <person name="Lui A."/>
            <person name="Macdonald P."/>
            <person name="Mauceli E."/>
            <person name="Naylor J.W."/>
            <person name="Nesbitt R."/>
            <person name="Nicol R."/>
            <person name="O'Leary S.B."/>
            <person name="Ratcliffe A."/>
            <person name="Rounsley S."/>
            <person name="She X."/>
            <person name="Sneddon K.M.B."/>
            <person name="Stewart S."/>
            <person name="Sougnez C."/>
            <person name="Stone S.M."/>
            <person name="Topham K."/>
            <person name="Vincent D."/>
            <person name="Wang S."/>
            <person name="Zimmer A.R."/>
            <person name="Birren B.W."/>
            <person name="Hood L."/>
            <person name="Lander E.S."/>
            <person name="Nusbaum C."/>
        </authorList>
    </citation>
    <scope>NUCLEOTIDE SEQUENCE [LARGE SCALE GENOMIC DNA]</scope>
</reference>
<name>GOG6A_HUMAN</name>
<accession>Q9NYA3</accession>
<accession>A8K959</accession>
<accession>Q9NYA7</accession>
<dbReference type="EMBL" id="AF263742">
    <property type="protein sequence ID" value="AAF72196.1"/>
    <property type="molecule type" value="mRNA"/>
</dbReference>
<dbReference type="EMBL" id="AF266285">
    <property type="protein sequence ID" value="AAF72535.1"/>
    <property type="molecule type" value="Genomic_DNA"/>
</dbReference>
<dbReference type="EMBL" id="AK292574">
    <property type="protein sequence ID" value="BAF85263.1"/>
    <property type="molecule type" value="mRNA"/>
</dbReference>
<dbReference type="EMBL" id="AC013486">
    <property type="status" value="NOT_ANNOTATED_CDS"/>
    <property type="molecule type" value="Genomic_DNA"/>
</dbReference>
<dbReference type="CCDS" id="CCDS32290.1"/>
<dbReference type="RefSeq" id="NP_001033729.2">
    <property type="nucleotide sequence ID" value="NM_001038640.2"/>
</dbReference>
<dbReference type="SMR" id="Q9NYA3"/>
<dbReference type="BioGRID" id="131163">
    <property type="interactions" value="61"/>
</dbReference>
<dbReference type="FunCoup" id="Q9NYA3">
    <property type="interactions" value="36"/>
</dbReference>
<dbReference type="IntAct" id="Q9NYA3">
    <property type="interactions" value="52"/>
</dbReference>
<dbReference type="STRING" id="9606.ENSP00000290438"/>
<dbReference type="GlyGen" id="Q9NYA3">
    <property type="glycosylation" value="1 site"/>
</dbReference>
<dbReference type="iPTMnet" id="Q9NYA3"/>
<dbReference type="PhosphoSitePlus" id="Q9NYA3"/>
<dbReference type="BioMuta" id="GOLGA6A"/>
<dbReference type="DMDM" id="215274151"/>
<dbReference type="jPOST" id="Q9NYA3"/>
<dbReference type="MassIVE" id="Q9NYA3"/>
<dbReference type="PaxDb" id="9606-ENSP00000290438"/>
<dbReference type="PeptideAtlas" id="Q9NYA3"/>
<dbReference type="ProteomicsDB" id="83204"/>
<dbReference type="Antibodypedia" id="26853">
    <property type="antibodies" value="115 antibodies from 21 providers"/>
</dbReference>
<dbReference type="DNASU" id="342096"/>
<dbReference type="Ensembl" id="ENST00000290438.3">
    <property type="protein sequence ID" value="ENSP00000290438.3"/>
    <property type="gene ID" value="ENSG00000159289.6"/>
</dbReference>
<dbReference type="GeneID" id="342096"/>
<dbReference type="KEGG" id="hsa:342096"/>
<dbReference type="MANE-Select" id="ENST00000290438.3">
    <property type="protein sequence ID" value="ENSP00000290438.3"/>
    <property type="RefSeq nucleotide sequence ID" value="NM_001038640.2"/>
    <property type="RefSeq protein sequence ID" value="NP_001033729.2"/>
</dbReference>
<dbReference type="UCSC" id="uc002axa.1">
    <property type="organism name" value="human"/>
</dbReference>
<dbReference type="AGR" id="HGNC:13567"/>
<dbReference type="CTD" id="342096"/>
<dbReference type="DisGeNET" id="342096"/>
<dbReference type="GeneCards" id="GOLGA6A"/>
<dbReference type="HGNC" id="HGNC:13567">
    <property type="gene designation" value="GOLGA6A"/>
</dbReference>
<dbReference type="HPA" id="ENSG00000159289">
    <property type="expression patterns" value="Tissue enriched (testis)"/>
</dbReference>
<dbReference type="MIM" id="610288">
    <property type="type" value="gene"/>
</dbReference>
<dbReference type="neXtProt" id="NX_Q9NYA3"/>
<dbReference type="OpenTargets" id="ENSG00000159289"/>
<dbReference type="PharmGKB" id="PA38364"/>
<dbReference type="VEuPathDB" id="HostDB:ENSG00000159289"/>
<dbReference type="eggNOG" id="KOG4725">
    <property type="taxonomic scope" value="Eukaryota"/>
</dbReference>
<dbReference type="GeneTree" id="ENSGT00530000062932"/>
<dbReference type="HOGENOM" id="CLU_012403_1_2_1"/>
<dbReference type="InParanoid" id="Q9NYA3"/>
<dbReference type="OMA" id="SVEACTL"/>
<dbReference type="OrthoDB" id="9538952at2759"/>
<dbReference type="PAN-GO" id="Q9NYA3">
    <property type="GO annotations" value="4 GO annotations based on evolutionary models"/>
</dbReference>
<dbReference type="PhylomeDB" id="Q9NYA3"/>
<dbReference type="TreeFam" id="TF316990"/>
<dbReference type="PathwayCommons" id="Q9NYA3"/>
<dbReference type="SignaLink" id="Q9NYA3"/>
<dbReference type="BioGRID-ORCS" id="342096">
    <property type="hits" value="589 hits in 1028 CRISPR screens"/>
</dbReference>
<dbReference type="GenomeRNAi" id="342096"/>
<dbReference type="Pharos" id="Q9NYA3">
    <property type="development level" value="Tdark"/>
</dbReference>
<dbReference type="PRO" id="PR:Q9NYA3"/>
<dbReference type="Proteomes" id="UP000005640">
    <property type="component" value="Chromosome 15"/>
</dbReference>
<dbReference type="RNAct" id="Q9NYA3">
    <property type="molecule type" value="protein"/>
</dbReference>
<dbReference type="Bgee" id="ENSG00000159289">
    <property type="expression patterns" value="Expressed in right testis and 99 other cell types or tissues"/>
</dbReference>
<dbReference type="GO" id="GO:0005801">
    <property type="term" value="C:cis-Golgi network"/>
    <property type="evidence" value="ECO:0000318"/>
    <property type="project" value="GO_Central"/>
</dbReference>
<dbReference type="GO" id="GO:0000137">
    <property type="term" value="C:Golgi cis cisterna"/>
    <property type="evidence" value="ECO:0000318"/>
    <property type="project" value="GO_Central"/>
</dbReference>
<dbReference type="GO" id="GO:0032580">
    <property type="term" value="C:Golgi cisterna membrane"/>
    <property type="evidence" value="ECO:0000318"/>
    <property type="project" value="GO_Central"/>
</dbReference>
<dbReference type="GO" id="GO:0007030">
    <property type="term" value="P:Golgi organization"/>
    <property type="evidence" value="ECO:0000318"/>
    <property type="project" value="GO_Central"/>
</dbReference>
<dbReference type="InterPro" id="IPR043976">
    <property type="entry name" value="GOLGA_cons_dom"/>
</dbReference>
<dbReference type="InterPro" id="IPR024858">
    <property type="entry name" value="Golgin_A"/>
</dbReference>
<dbReference type="PANTHER" id="PTHR10881:SF44">
    <property type="entry name" value="GOLGIN SUBFAMILY A MEMBER 6A-RELATED"/>
    <property type="match status" value="1"/>
</dbReference>
<dbReference type="PANTHER" id="PTHR10881">
    <property type="entry name" value="GOLGIN SUBFAMILY A MEMBER-RELATED"/>
    <property type="match status" value="1"/>
</dbReference>
<dbReference type="Pfam" id="PF15070">
    <property type="entry name" value="GOLGA2L5"/>
    <property type="match status" value="3"/>
</dbReference>
<sequence length="693" mass="79946">MWPQPYLPPHPMMLEESRQNKLAAAKKKLKEYQQRKSPGIPAGAKTKKKKTDSSPETTTSGGCHSPGDSQYQELAVALESSSVTISQLNENIESLKQQKKQVEHQLEEAKKTNNEIHKAQMERLETINILTLEKADLKTTLYHTKRAARHFEEESKDLAGRLQYSLQRIQELERALCAVSTQQQEEDRSSSCREAVLQRWLQQTIKERALLNAHVTQVTESLKQVQLERDEYAKHIKGERARWQERMWKMSVEARTLKEEKKRDIHRIQELERSLSELKNQMAEPPSLAPPAVTSVVEQLQDEAKHLRQEVEGLEGKLQSQVENNQALSLLSKEQKQRLQEQEEMLREQEAQRVREQERLCEQNERLREQQKTLQEQGERLRKQEQRLRKQEERLRKEEERLQKQEKRLWDQEERLWKKEERLQKQEERLALSQNHKLDKQLAEPQCSFEDLNNEKKSALQLEQQVKELQEKLDEEHLEAASHQNQQLETQLSLVALPGEGDGGQHLDSEEEEAPRPTPNIPEDLESREATSSFMDLPKEKADGTEQVERRELGFVQPSGVTDGMRESFTVYESQGAVPNTRHQEMEDVIRLAQKEEEMKVKLLELQELVLPLVGNHEGHGKFLIAAQNPADEPTPGAPAPQELGAAGEQDVFYEVSLDNNVEPAPGAAREGSPHDNPTVQQIVQLSPVMQDT</sequence>
<comment type="interaction">
    <interactant intactId="EBI-11163335">
        <id>Q9NYA3</id>
    </interactant>
    <interactant intactId="EBI-8643161">
        <id>Q9NX04</id>
        <label>AIRIM</label>
    </interactant>
    <organismsDiffer>false</organismsDiffer>
    <experiments>3</experiments>
</comment>
<comment type="interaction">
    <interactant intactId="EBI-11163335">
        <id>Q9NYA3</id>
    </interactant>
    <interactant intactId="EBI-750254">
        <id>Q9BRR9</id>
        <label>ARHGAP9</label>
    </interactant>
    <organismsDiffer>false</organismsDiffer>
    <experiments>3</experiments>
</comment>
<comment type="interaction">
    <interactant intactId="EBI-11163335">
        <id>Q9NYA3</id>
    </interactant>
    <interactant intactId="EBI-356517">
        <id>Q9UL15</id>
        <label>BAG5</label>
    </interactant>
    <organismsDiffer>false</organismsDiffer>
    <experiments>3</experiments>
</comment>
<comment type="interaction">
    <interactant intactId="EBI-11163335">
        <id>Q9NYA3</id>
    </interactant>
    <interactant intactId="EBI-11524851">
        <id>Q8NA61-2</id>
        <label>CBY2</label>
    </interactant>
    <organismsDiffer>false</organismsDiffer>
    <experiments>3</experiments>
</comment>
<comment type="interaction">
    <interactant intactId="EBI-11163335">
        <id>Q9NYA3</id>
    </interactant>
    <interactant intactId="EBI-374980">
        <id>O00311</id>
        <label>CDC7</label>
    </interactant>
    <organismsDiffer>false</organismsDiffer>
    <experiments>3</experiments>
</comment>
<comment type="interaction">
    <interactant intactId="EBI-11163335">
        <id>Q9NYA3</id>
    </interactant>
    <interactant intactId="EBI-745369">
        <id>Q9H4E7</id>
        <label>DEF6</label>
    </interactant>
    <organismsDiffer>false</organismsDiffer>
    <experiments>3</experiments>
</comment>
<comment type="interaction">
    <interactant intactId="EBI-11163335">
        <id>Q9NYA3</id>
    </interactant>
    <interactant intactId="EBI-1054321">
        <id>Q68J44</id>
        <label>DUSP29</label>
    </interactant>
    <organismsDiffer>false</organismsDiffer>
    <experiments>3</experiments>
</comment>
<comment type="interaction">
    <interactant intactId="EBI-11163335">
        <id>Q9NYA3</id>
    </interactant>
    <interactant intactId="EBI-742350">
        <id>Q14241</id>
        <label>ELOA</label>
    </interactant>
    <organismsDiffer>false</organismsDiffer>
    <experiments>3</experiments>
</comment>
<comment type="interaction">
    <interactant intactId="EBI-11163335">
        <id>Q9NYA3</id>
    </interactant>
    <interactant intactId="EBI-744099">
        <id>Q9H0I2</id>
        <label>ENKD1</label>
    </interactant>
    <organismsDiffer>false</organismsDiffer>
    <experiments>3</experiments>
</comment>
<comment type="interaction">
    <interactant intactId="EBI-11163335">
        <id>Q9NYA3</id>
    </interactant>
    <interactant intactId="EBI-7225287">
        <id>Q96MY7</id>
        <label>FAM161B</label>
    </interactant>
    <organismsDiffer>false</organismsDiffer>
    <experiments>3</experiments>
</comment>
<comment type="interaction">
    <interactant intactId="EBI-11163335">
        <id>Q9NYA3</id>
    </interactant>
    <interactant intactId="EBI-701903">
        <id>Q14192</id>
        <label>FHL2</label>
    </interactant>
    <organismsDiffer>false</organismsDiffer>
    <experiments>3</experiments>
</comment>
<comment type="interaction">
    <interactant intactId="EBI-11163335">
        <id>Q9NYA3</id>
    </interactant>
    <interactant intactId="EBI-372506">
        <id>Q8TAE8</id>
        <label>GADD45GIP1</label>
    </interactant>
    <organismsDiffer>false</organismsDiffer>
    <experiments>3</experiments>
</comment>
<comment type="interaction">
    <interactant intactId="EBI-11163335">
        <id>Q9NYA3</id>
    </interactant>
    <interactant intactId="EBI-3893317">
        <id>P09067</id>
        <label>HOXB5</label>
    </interactant>
    <organismsDiffer>false</organismsDiffer>
    <experiments>3</experiments>
</comment>
<comment type="interaction">
    <interactant intactId="EBI-11163335">
        <id>Q9NYA3</id>
    </interactant>
    <interactant intactId="EBI-747204">
        <id>Q9UKT9</id>
        <label>IKZF3</label>
    </interactant>
    <organismsDiffer>false</organismsDiffer>
    <experiments>3</experiments>
</comment>
<comment type="interaction">
    <interactant intactId="EBI-11163335">
        <id>Q9NYA3</id>
    </interactant>
    <interactant intactId="EBI-2556193">
        <id>Q63ZY3</id>
        <label>KANK2</label>
    </interactant>
    <organismsDiffer>false</organismsDiffer>
    <experiments>3</experiments>
</comment>
<comment type="interaction">
    <interactant intactId="EBI-11163335">
        <id>Q9NYA3</id>
    </interactant>
    <interactant intactId="EBI-4397613">
        <id>Q7L273</id>
        <label>KCTD9</label>
    </interactant>
    <organismsDiffer>false</organismsDiffer>
    <experiments>4</experiments>
</comment>
<comment type="interaction">
    <interactant intactId="EBI-11163335">
        <id>Q9NYA3</id>
    </interactant>
    <interactant intactId="EBI-710124">
        <id>O60341</id>
        <label>KDM1A</label>
    </interactant>
    <organismsDiffer>false</organismsDiffer>
    <experiments>3</experiments>
</comment>
<comment type="interaction">
    <interactant intactId="EBI-11163335">
        <id>Q9NYA3</id>
    </interactant>
    <interactant intactId="EBI-8472129">
        <id>Q9HAQ2</id>
        <label>KIF9</label>
    </interactant>
    <organismsDiffer>false</organismsDiffer>
    <experiments>5</experiments>
</comment>
<comment type="interaction">
    <interactant intactId="EBI-11163335">
        <id>Q9NYA3</id>
    </interactant>
    <interactant intactId="EBI-6426443">
        <id>Q2WGJ6</id>
        <label>KLHL38</label>
    </interactant>
    <organismsDiffer>false</organismsDiffer>
    <experiments>3</experiments>
</comment>
<comment type="interaction">
    <interactant intactId="EBI-11163335">
        <id>Q9NYA3</id>
    </interactant>
    <interactant intactId="EBI-713568">
        <id>P45984</id>
        <label>MAPK9</label>
    </interactant>
    <organismsDiffer>false</organismsDiffer>
    <experiments>3</experiments>
</comment>
<comment type="interaction">
    <interactant intactId="EBI-11163335">
        <id>Q9NYA3</id>
    </interactant>
    <interactant intactId="EBI-14086479">
        <id>Q8IVT4</id>
        <label>MGC50722</label>
    </interactant>
    <organismsDiffer>false</organismsDiffer>
    <experiments>3</experiments>
</comment>
<comment type="interaction">
    <interactant intactId="EBI-11163335">
        <id>Q9NYA3</id>
    </interactant>
    <interactant intactId="EBI-2340269">
        <id>Q13064</id>
        <label>MKRN3</label>
    </interactant>
    <organismsDiffer>false</organismsDiffer>
    <experiments>3</experiments>
</comment>
<comment type="interaction">
    <interactant intactId="EBI-11163335">
        <id>Q9NYA3</id>
    </interactant>
    <interactant intactId="EBI-10288852">
        <id>Q9UBU8-2</id>
        <label>MORF4L1</label>
    </interactant>
    <organismsDiffer>false</organismsDiffer>
    <experiments>3</experiments>
</comment>
<comment type="interaction">
    <interactant intactId="EBI-11163335">
        <id>Q9NYA3</id>
    </interactant>
    <interactant intactId="EBI-1757866">
        <id>P00540</id>
        <label>MOS</label>
    </interactant>
    <organismsDiffer>false</organismsDiffer>
    <experiments>3</experiments>
</comment>
<comment type="interaction">
    <interactant intactId="EBI-11163335">
        <id>Q9NYA3</id>
    </interactant>
    <interactant intactId="EBI-720441">
        <id>Q96DV4</id>
        <label>MRPL38</label>
    </interactant>
    <organismsDiffer>false</organismsDiffer>
    <experiments>3</experiments>
</comment>
<comment type="interaction">
    <interactant intactId="EBI-11163335">
        <id>Q9NYA3</id>
    </interactant>
    <interactant intactId="EBI-744402">
        <id>Q9NP98</id>
        <label>MYOZ1</label>
    </interactant>
    <organismsDiffer>false</organismsDiffer>
    <experiments>3</experiments>
</comment>
<comment type="interaction">
    <interactant intactId="EBI-11163335">
        <id>Q9NYA3</id>
    </interactant>
    <interactant intactId="EBI-5662487">
        <id>Q8TDC0</id>
        <label>MYOZ3</label>
    </interactant>
    <organismsDiffer>false</organismsDiffer>
    <experiments>3</experiments>
</comment>
<comment type="interaction">
    <interactant intactId="EBI-11163335">
        <id>Q9NYA3</id>
    </interactant>
    <interactant intactId="EBI-2880203">
        <id>O76041</id>
        <label>NEBL</label>
    </interactant>
    <organismsDiffer>false</organismsDiffer>
    <experiments>3</experiments>
</comment>
<comment type="interaction">
    <interactant intactId="EBI-11163335">
        <id>Q9NYA3</id>
    </interactant>
    <interactant intactId="EBI-1055079">
        <id>O15160</id>
        <label>POLR1C</label>
    </interactant>
    <organismsDiffer>false</organismsDiffer>
    <experiments>3</experiments>
</comment>
<comment type="interaction">
    <interactant intactId="EBI-11163335">
        <id>Q9NYA3</id>
    </interactant>
    <interactant intactId="EBI-302388">
        <id>P30153</id>
        <label>PPP2R1A</label>
    </interactant>
    <organismsDiffer>false</organismsDiffer>
    <experiments>3</experiments>
</comment>
<comment type="interaction">
    <interactant intactId="EBI-11163335">
        <id>Q9NYA3</id>
    </interactant>
    <interactant intactId="EBI-1383852">
        <id>P54646</id>
        <label>PRKAA2</label>
    </interactant>
    <organismsDiffer>false</organismsDiffer>
    <experiments>3</experiments>
</comment>
<comment type="interaction">
    <interactant intactId="EBI-11163335">
        <id>Q9NYA3</id>
    </interactant>
    <interactant intactId="EBI-359352">
        <id>P25786</id>
        <label>PSMA1</label>
    </interactant>
    <organismsDiffer>false</organismsDiffer>
    <experiments>3</experiments>
</comment>
<comment type="interaction">
    <interactant intactId="EBI-11163335">
        <id>Q9NYA3</id>
    </interactant>
    <interactant intactId="EBI-11995806">
        <id>Q9H0A9-2</id>
        <label>SPATC1L</label>
    </interactant>
    <organismsDiffer>false</organismsDiffer>
    <experiments>5</experiments>
</comment>
<comment type="interaction">
    <interactant intactId="EBI-11163335">
        <id>Q9NYA3</id>
    </interactant>
    <interactant intactId="EBI-745392">
        <id>Q9BSW7</id>
        <label>SYT17</label>
    </interactant>
    <organismsDiffer>false</organismsDiffer>
    <experiments>5</experiments>
</comment>
<comment type="interaction">
    <interactant intactId="EBI-11163335">
        <id>Q9NYA3</id>
    </interactant>
    <interactant intactId="EBI-3650647">
        <id>Q9BUZ4</id>
        <label>TRAF4</label>
    </interactant>
    <organismsDiffer>false</organismsDiffer>
    <experiments>3</experiments>
</comment>
<comment type="interaction">
    <interactant intactId="EBI-11163335">
        <id>Q9NYA3</id>
    </interactant>
    <interactant intactId="EBI-8451480">
        <id>O75865-2</id>
        <label>TRAPPC6A</label>
    </interactant>
    <organismsDiffer>false</organismsDiffer>
    <experiments>3</experiments>
</comment>
<comment type="interaction">
    <interactant intactId="EBI-11163335">
        <id>Q9NYA3</id>
    </interactant>
    <interactant intactId="EBI-10241197">
        <id>Q3SY00</id>
        <label>TSGA10IP</label>
    </interactant>
    <organismsDiffer>false</organismsDiffer>
    <experiments>3</experiments>
</comment>
<comment type="interaction">
    <interactant intactId="EBI-11163335">
        <id>Q9NYA3</id>
    </interactant>
    <interactant intactId="EBI-9526213">
        <id>Q8N0Z6</id>
        <label>TTC5</label>
    </interactant>
    <organismsDiffer>false</organismsDiffer>
    <experiments>3</experiments>
</comment>
<comment type="interaction">
    <interactant intactId="EBI-11163335">
        <id>Q9NYA3</id>
    </interactant>
    <interactant intactId="EBI-359793">
        <id>P40222</id>
        <label>TXLNA</label>
    </interactant>
    <organismsDiffer>false</organismsDiffer>
    <experiments>3</experiments>
</comment>
<comment type="interaction">
    <interactant intactId="EBI-11163335">
        <id>Q9NYA3</id>
    </interactant>
    <interactant intactId="EBI-12041225">
        <id>Q9Y4E8-2</id>
        <label>USP15</label>
    </interactant>
    <organismsDiffer>false</organismsDiffer>
    <experiments>3</experiments>
</comment>
<comment type="interaction">
    <interactant intactId="EBI-11163335">
        <id>Q9NYA3</id>
    </interactant>
    <interactant intactId="EBI-743272">
        <id>O75604</id>
        <label>USP2</label>
    </interactant>
    <organismsDiffer>false</organismsDiffer>
    <experiments>3</experiments>
</comment>
<comment type="interaction">
    <interactant intactId="EBI-11163335">
        <id>Q9NYA3</id>
    </interactant>
    <interactant intactId="EBI-11737646">
        <id>Q5TAP6</id>
        <label>UTP14C</label>
    </interactant>
    <organismsDiffer>false</organismsDiffer>
    <experiments>3</experiments>
</comment>
<comment type="interaction">
    <interactant intactId="EBI-11163335">
        <id>Q9NYA3</id>
    </interactant>
    <interactant intactId="EBI-10300345">
        <id>Q9BW85</id>
        <label>YJU2</label>
    </interactant>
    <organismsDiffer>false</organismsDiffer>
    <experiments>3</experiments>
</comment>
<comment type="interaction">
    <interactant intactId="EBI-11163335">
        <id>Q9NYA3</id>
    </interactant>
    <interactant intactId="EBI-14104088">
        <id>Q53FD0-2</id>
        <label>ZC2HC1C</label>
    </interactant>
    <organismsDiffer>false</organismsDiffer>
    <experiments>3</experiments>
</comment>
<comment type="tissue specificity">
    <text>Highly expressed in seminiferous tubes in testis. Highly expressed in spermatids, barely detectable in late pachytene spermatocytes, and not detectable in spermatogonia. Detected at intermediate levels in pancreas and lymph nodes, and at much lower levels in spleen, peripheral blood leukocytes, skeletal muscle, liver, lung, placenta, brain and heart.</text>
</comment>
<comment type="similarity">
    <text evidence="4">Belongs to the GOLGA6 family.</text>
</comment>
<comment type="caution">
    <text evidence="4">Maps to a duplicated region on chromosome 15; the gene is present in at least 4 almost identical copies.</text>
</comment>